<accession>P65551</accession>
<accession>Q8P296</accession>
<protein>
    <recommendedName>
        <fullName evidence="1">Protein NrdI</fullName>
    </recommendedName>
</protein>
<sequence length="162" mass="18114">MAELIIVYFSSKSNNTHRFVQKLGLPAQRIPVDNRPLEVSTHYLLIVPTYAAGGSDAKGAVPKQVIRFLNNPNNRKHCKGVISSGNTNFGDTFALAGPIISQKLQVPLLHQFELLGTATDVKKVQAIFARLKHHTHDKQKQTNNLITERTHPCHKPMRHTSH</sequence>
<evidence type="ECO:0000255" key="1">
    <source>
        <dbReference type="HAMAP-Rule" id="MF_00128"/>
    </source>
</evidence>
<reference key="1">
    <citation type="journal article" date="2002" name="Proc. Natl. Acad. Sci. U.S.A.">
        <title>Genome sequence and comparative microarray analysis of serotype M18 group A Streptococcus strains associated with acute rheumatic fever outbreaks.</title>
        <authorList>
            <person name="Smoot J.C."/>
            <person name="Barbian K.D."/>
            <person name="Van Gompel J.J."/>
            <person name="Smoot L.M."/>
            <person name="Chaussee M.S."/>
            <person name="Sylva G.L."/>
            <person name="Sturdevant D.E."/>
            <person name="Ricklefs S.M."/>
            <person name="Porcella S.F."/>
            <person name="Parkins L.D."/>
            <person name="Beres S.B."/>
            <person name="Campbell D.S."/>
            <person name="Smith T.M."/>
            <person name="Zhang Q."/>
            <person name="Kapur V."/>
            <person name="Daly J.A."/>
            <person name="Veasy L.G."/>
            <person name="Musser J.M."/>
        </authorList>
    </citation>
    <scope>NUCLEOTIDE SEQUENCE [LARGE SCALE GENOMIC DNA]</scope>
    <source>
        <strain>MGAS8232</strain>
    </source>
</reference>
<proteinExistence type="inferred from homology"/>
<dbReference type="EMBL" id="AE009949">
    <property type="protein sequence ID" value="AAL97199.1"/>
    <property type="molecule type" value="Genomic_DNA"/>
</dbReference>
<dbReference type="RefSeq" id="WP_002990870.1">
    <property type="nucleotide sequence ID" value="NC_003485.1"/>
</dbReference>
<dbReference type="SMR" id="P65551"/>
<dbReference type="GeneID" id="69901324"/>
<dbReference type="KEGG" id="spm:spyM18_0471"/>
<dbReference type="HOGENOM" id="CLU_114845_0_0_9"/>
<dbReference type="GO" id="GO:0010181">
    <property type="term" value="F:FMN binding"/>
    <property type="evidence" value="ECO:0007669"/>
    <property type="project" value="InterPro"/>
</dbReference>
<dbReference type="GO" id="GO:0036211">
    <property type="term" value="P:protein modification process"/>
    <property type="evidence" value="ECO:0007669"/>
    <property type="project" value="InterPro"/>
</dbReference>
<dbReference type="Gene3D" id="3.40.50.360">
    <property type="match status" value="1"/>
</dbReference>
<dbReference type="HAMAP" id="MF_00128">
    <property type="entry name" value="NrdI"/>
    <property type="match status" value="1"/>
</dbReference>
<dbReference type="InterPro" id="IPR029039">
    <property type="entry name" value="Flavoprotein-like_sf"/>
</dbReference>
<dbReference type="InterPro" id="IPR020852">
    <property type="entry name" value="RNR_Ib_NrdI_bac"/>
</dbReference>
<dbReference type="InterPro" id="IPR004465">
    <property type="entry name" value="RNR_NrdI"/>
</dbReference>
<dbReference type="NCBIfam" id="TIGR00333">
    <property type="entry name" value="nrdI"/>
    <property type="match status" value="1"/>
</dbReference>
<dbReference type="PANTHER" id="PTHR37297">
    <property type="entry name" value="PROTEIN NRDI"/>
    <property type="match status" value="1"/>
</dbReference>
<dbReference type="PANTHER" id="PTHR37297:SF1">
    <property type="entry name" value="PROTEIN NRDI"/>
    <property type="match status" value="1"/>
</dbReference>
<dbReference type="Pfam" id="PF07972">
    <property type="entry name" value="Flavodoxin_NdrI"/>
    <property type="match status" value="1"/>
</dbReference>
<dbReference type="PIRSF" id="PIRSF005087">
    <property type="entry name" value="NrdI"/>
    <property type="match status" value="1"/>
</dbReference>
<dbReference type="SUPFAM" id="SSF52218">
    <property type="entry name" value="Flavoproteins"/>
    <property type="match status" value="1"/>
</dbReference>
<organism>
    <name type="scientific">Streptococcus pyogenes serotype M18 (strain MGAS8232)</name>
    <dbReference type="NCBI Taxonomy" id="186103"/>
    <lineage>
        <taxon>Bacteria</taxon>
        <taxon>Bacillati</taxon>
        <taxon>Bacillota</taxon>
        <taxon>Bacilli</taxon>
        <taxon>Lactobacillales</taxon>
        <taxon>Streptococcaceae</taxon>
        <taxon>Streptococcus</taxon>
    </lineage>
</organism>
<feature type="chain" id="PRO_0000164346" description="Protein NrdI">
    <location>
        <begin position="1"/>
        <end position="162"/>
    </location>
</feature>
<name>NRDI_STRP8</name>
<gene>
    <name evidence="1" type="primary">nrdI</name>
    <name type="ordered locus">spyM18_0471</name>
</gene>
<comment type="function">
    <text evidence="1">Probably involved in ribonucleotide reductase function.</text>
</comment>
<comment type="similarity">
    <text evidence="1">Belongs to the NrdI family.</text>
</comment>